<organism>
    <name type="scientific">Pectobacterium atrosepticum (strain SCRI 1043 / ATCC BAA-672)</name>
    <name type="common">Erwinia carotovora subsp. atroseptica</name>
    <dbReference type="NCBI Taxonomy" id="218491"/>
    <lineage>
        <taxon>Bacteria</taxon>
        <taxon>Pseudomonadati</taxon>
        <taxon>Pseudomonadota</taxon>
        <taxon>Gammaproteobacteria</taxon>
        <taxon>Enterobacterales</taxon>
        <taxon>Pectobacteriaceae</taxon>
        <taxon>Pectobacterium</taxon>
    </lineage>
</organism>
<reference key="1">
    <citation type="journal article" date="2004" name="Proc. Natl. Acad. Sci. U.S.A.">
        <title>Genome sequence of the enterobacterial phytopathogen Erwinia carotovora subsp. atroseptica and characterization of virulence factors.</title>
        <authorList>
            <person name="Bell K.S."/>
            <person name="Sebaihia M."/>
            <person name="Pritchard L."/>
            <person name="Holden M.T.G."/>
            <person name="Hyman L.J."/>
            <person name="Holeva M.C."/>
            <person name="Thomson N.R."/>
            <person name="Bentley S.D."/>
            <person name="Churcher L.J.C."/>
            <person name="Mungall K."/>
            <person name="Atkin R."/>
            <person name="Bason N."/>
            <person name="Brooks K."/>
            <person name="Chillingworth T."/>
            <person name="Clark K."/>
            <person name="Doggett J."/>
            <person name="Fraser A."/>
            <person name="Hance Z."/>
            <person name="Hauser H."/>
            <person name="Jagels K."/>
            <person name="Moule S."/>
            <person name="Norbertczak H."/>
            <person name="Ormond D."/>
            <person name="Price C."/>
            <person name="Quail M.A."/>
            <person name="Sanders M."/>
            <person name="Walker D."/>
            <person name="Whitehead S."/>
            <person name="Salmond G.P.C."/>
            <person name="Birch P.R.J."/>
            <person name="Parkhill J."/>
            <person name="Toth I.K."/>
        </authorList>
    </citation>
    <scope>NUCLEOTIDE SEQUENCE [LARGE SCALE GENOMIC DNA]</scope>
    <source>
        <strain>SCRI 1043 / ATCC BAA-672</strain>
    </source>
</reference>
<feature type="initiator methionine" description="Removed" evidence="1">
    <location>
        <position position="1"/>
    </location>
</feature>
<feature type="chain" id="PRO_0000239123" description="CDP-diacylglycerol--glycerol-3-phosphate 3-phosphatidyltransferase">
    <location>
        <begin position="2"/>
        <end position="182"/>
    </location>
</feature>
<feature type="topological domain" description="Cytoplasmic" evidence="2">
    <location>
        <begin position="2"/>
        <end position="12"/>
    </location>
</feature>
<feature type="transmembrane region" description="Helical" evidence="2">
    <location>
        <begin position="13"/>
        <end position="37"/>
    </location>
</feature>
<feature type="topological domain" description="Periplasmic" evidence="2">
    <location>
        <begin position="38"/>
        <end position="60"/>
    </location>
</feature>
<feature type="transmembrane region" description="Helical" evidence="2">
    <location>
        <begin position="61"/>
        <end position="81"/>
    </location>
</feature>
<feature type="topological domain" description="Cytoplasmic" evidence="2">
    <location>
        <begin position="82"/>
        <end position="86"/>
    </location>
</feature>
<feature type="transmembrane region" description="Helical" evidence="2">
    <location>
        <begin position="87"/>
        <end position="107"/>
    </location>
</feature>
<feature type="topological domain" description="Periplasmic" evidence="2">
    <location>
        <begin position="108"/>
        <end position="145"/>
    </location>
</feature>
<feature type="transmembrane region" description="Helical" evidence="2">
    <location>
        <begin position="146"/>
        <end position="168"/>
    </location>
</feature>
<feature type="topological domain" description="Cytoplasmic" evidence="2">
    <location>
        <begin position="169"/>
        <end position="181"/>
    </location>
</feature>
<gene>
    <name evidence="2" type="primary">pgsA</name>
    <name type="ordered locus">ECA2880</name>
</gene>
<evidence type="ECO:0000250" key="1"/>
<evidence type="ECO:0000255" key="2">
    <source>
        <dbReference type="HAMAP-Rule" id="MF_01437"/>
    </source>
</evidence>
<name>PGSA_PECAS</name>
<proteinExistence type="inferred from homology"/>
<dbReference type="EC" id="2.7.8.5" evidence="2"/>
<dbReference type="EMBL" id="BX950851">
    <property type="protein sequence ID" value="CAG75780.1"/>
    <property type="molecule type" value="Genomic_DNA"/>
</dbReference>
<dbReference type="RefSeq" id="WP_005974417.1">
    <property type="nucleotide sequence ID" value="NC_004547.2"/>
</dbReference>
<dbReference type="SMR" id="Q6D364"/>
<dbReference type="STRING" id="218491.ECA2880"/>
<dbReference type="GeneID" id="57208438"/>
<dbReference type="KEGG" id="eca:ECA2880"/>
<dbReference type="PATRIC" id="fig|218491.5.peg.2918"/>
<dbReference type="eggNOG" id="COG0558">
    <property type="taxonomic scope" value="Bacteria"/>
</dbReference>
<dbReference type="HOGENOM" id="CLU_051314_2_1_6"/>
<dbReference type="OrthoDB" id="9796672at2"/>
<dbReference type="UniPathway" id="UPA00084">
    <property type="reaction ID" value="UER00503"/>
</dbReference>
<dbReference type="Proteomes" id="UP000007966">
    <property type="component" value="Chromosome"/>
</dbReference>
<dbReference type="GO" id="GO:0005886">
    <property type="term" value="C:plasma membrane"/>
    <property type="evidence" value="ECO:0007669"/>
    <property type="project" value="UniProtKB-SubCell"/>
</dbReference>
<dbReference type="GO" id="GO:0008444">
    <property type="term" value="F:CDP-diacylglycerol-glycerol-3-phosphate 3-phosphatidyltransferase activity"/>
    <property type="evidence" value="ECO:0007669"/>
    <property type="project" value="UniProtKB-UniRule"/>
</dbReference>
<dbReference type="GO" id="GO:0006655">
    <property type="term" value="P:phosphatidylglycerol biosynthetic process"/>
    <property type="evidence" value="ECO:0007669"/>
    <property type="project" value="UniProtKB-UniRule"/>
</dbReference>
<dbReference type="FunFam" id="1.20.120.1760:FF:000001">
    <property type="entry name" value="CDP-diacylglycerol--glycerol-3-phosphate 3-phosphatidyltransferase"/>
    <property type="match status" value="1"/>
</dbReference>
<dbReference type="Gene3D" id="1.20.120.1760">
    <property type="match status" value="1"/>
</dbReference>
<dbReference type="HAMAP" id="MF_01437">
    <property type="entry name" value="PgsA"/>
    <property type="match status" value="1"/>
</dbReference>
<dbReference type="InterPro" id="IPR050324">
    <property type="entry name" value="CDP-alcohol_PTase-I"/>
</dbReference>
<dbReference type="InterPro" id="IPR000462">
    <property type="entry name" value="CDP-OH_P_trans"/>
</dbReference>
<dbReference type="InterPro" id="IPR043130">
    <property type="entry name" value="CDP-OH_PTrfase_TM_dom"/>
</dbReference>
<dbReference type="InterPro" id="IPR048254">
    <property type="entry name" value="CDP_ALCOHOL_P_TRANSF_CS"/>
</dbReference>
<dbReference type="InterPro" id="IPR023762">
    <property type="entry name" value="PGP_synthase_bac"/>
</dbReference>
<dbReference type="InterPro" id="IPR004570">
    <property type="entry name" value="Phosphatidylglycerol_P_synth"/>
</dbReference>
<dbReference type="NCBIfam" id="TIGR00560">
    <property type="entry name" value="pgsA"/>
    <property type="match status" value="1"/>
</dbReference>
<dbReference type="NCBIfam" id="NF008090">
    <property type="entry name" value="PRK10832.1"/>
    <property type="match status" value="1"/>
</dbReference>
<dbReference type="PANTHER" id="PTHR14269:SF62">
    <property type="entry name" value="CDP-DIACYLGLYCEROL--GLYCEROL-3-PHOSPHATE 3-PHOSPHATIDYLTRANSFERASE 1, CHLOROPLASTIC"/>
    <property type="match status" value="1"/>
</dbReference>
<dbReference type="PANTHER" id="PTHR14269">
    <property type="entry name" value="CDP-DIACYLGLYCEROL--GLYCEROL-3-PHOSPHATE 3-PHOSPHATIDYLTRANSFERASE-RELATED"/>
    <property type="match status" value="1"/>
</dbReference>
<dbReference type="Pfam" id="PF01066">
    <property type="entry name" value="CDP-OH_P_transf"/>
    <property type="match status" value="1"/>
</dbReference>
<dbReference type="PIRSF" id="PIRSF000847">
    <property type="entry name" value="Phos_ph_gly_syn"/>
    <property type="match status" value="1"/>
</dbReference>
<dbReference type="PROSITE" id="PS00379">
    <property type="entry name" value="CDP_ALCOHOL_P_TRANSF"/>
    <property type="match status" value="1"/>
</dbReference>
<comment type="function">
    <text evidence="2">Catalyzes the conversion of cytidine diphosphate diacylglycerol (CDP-DG) and glycerol 3-phosphate into phosphatidylglycerol. Essential for the synthesis of anionic phospholipids, thereby playing a role in balancing the ratio of zwitterionic and anionic phospholipids, which is thought to be important for normal membrane function.</text>
</comment>
<comment type="catalytic activity">
    <reaction evidence="2">
        <text>a CDP-1,2-diacyl-sn-glycerol + sn-glycerol 3-phosphate = a 1,2-diacyl-sn-glycero-3-phospho-(1'-sn-glycero-3'-phosphate) + CMP + H(+)</text>
        <dbReference type="Rhea" id="RHEA:12593"/>
        <dbReference type="ChEBI" id="CHEBI:15378"/>
        <dbReference type="ChEBI" id="CHEBI:57597"/>
        <dbReference type="ChEBI" id="CHEBI:58332"/>
        <dbReference type="ChEBI" id="CHEBI:60110"/>
        <dbReference type="ChEBI" id="CHEBI:60377"/>
        <dbReference type="EC" id="2.7.8.5"/>
    </reaction>
</comment>
<comment type="pathway">
    <text evidence="2">Phospholipid metabolism; phosphatidylglycerol biosynthesis; phosphatidylglycerol from CDP-diacylglycerol: step 1/2.</text>
</comment>
<comment type="subcellular location">
    <subcellularLocation>
        <location evidence="2">Cell inner membrane</location>
        <topology evidence="2">Multi-pass membrane protein</topology>
    </subcellularLocation>
</comment>
<comment type="similarity">
    <text evidence="2">Belongs to the CDP-alcohol phosphatidyltransferase class-I family.</text>
</comment>
<sequence>MQFNIPTLLTLFRVALIPFFVLAFYLPFVWAPLLCALIFVFAAVTDWFDGFLARRWKQTTRFGAFLDPVADKVMVAVALVLVAEYYHSWWITLPAATMIAREIIISALREWMAEIGKRSSVAVSWIGKVKTTAQMMALFALLWRPERIVEGIGVAALYIAAVLTFWSMFQYLNAARHDLLEP</sequence>
<keyword id="KW-0997">Cell inner membrane</keyword>
<keyword id="KW-1003">Cell membrane</keyword>
<keyword id="KW-0444">Lipid biosynthesis</keyword>
<keyword id="KW-0443">Lipid metabolism</keyword>
<keyword id="KW-0472">Membrane</keyword>
<keyword id="KW-0594">Phospholipid biosynthesis</keyword>
<keyword id="KW-1208">Phospholipid metabolism</keyword>
<keyword id="KW-1185">Reference proteome</keyword>
<keyword id="KW-0808">Transferase</keyword>
<keyword id="KW-0812">Transmembrane</keyword>
<keyword id="KW-1133">Transmembrane helix</keyword>
<accession>Q6D364</accession>
<protein>
    <recommendedName>
        <fullName evidence="2">CDP-diacylglycerol--glycerol-3-phosphate 3-phosphatidyltransferase</fullName>
        <ecNumber evidence="2">2.7.8.5</ecNumber>
    </recommendedName>
    <alternativeName>
        <fullName evidence="2">Phosphatidylglycerophosphate synthase</fullName>
        <shortName evidence="2">PGP synthase</shortName>
    </alternativeName>
</protein>